<gene>
    <name evidence="1" type="primary">fosB</name>
    <name type="ordered locus">SA2124</name>
</gene>
<dbReference type="EC" id="2.5.1.-" evidence="1"/>
<dbReference type="EMBL" id="BA000018">
    <property type="protein sequence ID" value="BAB43425.1"/>
    <property type="molecule type" value="Genomic_DNA"/>
</dbReference>
<dbReference type="PIR" id="H90032">
    <property type="entry name" value="H90032"/>
</dbReference>
<dbReference type="RefSeq" id="WP_000920239.1">
    <property type="nucleotide sequence ID" value="NC_002745.2"/>
</dbReference>
<dbReference type="PDB" id="4NAY">
    <property type="method" value="X-ray"/>
    <property type="resolution" value="1.42 A"/>
    <property type="chains" value="A=2-139"/>
</dbReference>
<dbReference type="PDB" id="4NAZ">
    <property type="method" value="X-ray"/>
    <property type="resolution" value="1.15 A"/>
    <property type="chains" value="A=2-139"/>
</dbReference>
<dbReference type="PDB" id="4NB0">
    <property type="method" value="X-ray"/>
    <property type="resolution" value="1.62 A"/>
    <property type="chains" value="A/B=2-139"/>
</dbReference>
<dbReference type="PDB" id="4NB1">
    <property type="method" value="X-ray"/>
    <property type="resolution" value="1.80 A"/>
    <property type="chains" value="A/B=1-139"/>
</dbReference>
<dbReference type="PDB" id="4NB2">
    <property type="method" value="X-ray"/>
    <property type="resolution" value="1.89 A"/>
    <property type="chains" value="A/B=1-139"/>
</dbReference>
<dbReference type="PDBsum" id="4NAY"/>
<dbReference type="PDBsum" id="4NAZ"/>
<dbReference type="PDBsum" id="4NB0"/>
<dbReference type="PDBsum" id="4NB1"/>
<dbReference type="PDBsum" id="4NB2"/>
<dbReference type="SMR" id="P60864"/>
<dbReference type="EnsemblBacteria" id="BAB43425">
    <property type="protein sequence ID" value="BAB43425"/>
    <property type="gene ID" value="BAB43425"/>
</dbReference>
<dbReference type="KEGG" id="sau:SA2124"/>
<dbReference type="HOGENOM" id="CLU_121356_0_0_9"/>
<dbReference type="BioCyc" id="MetaCyc:MONOMER-19022"/>
<dbReference type="EvolutionaryTrace" id="P60864"/>
<dbReference type="GO" id="GO:0005737">
    <property type="term" value="C:cytoplasm"/>
    <property type="evidence" value="ECO:0007669"/>
    <property type="project" value="UniProtKB-SubCell"/>
</dbReference>
<dbReference type="GO" id="GO:0000287">
    <property type="term" value="F:magnesium ion binding"/>
    <property type="evidence" value="ECO:0007669"/>
    <property type="project" value="UniProtKB-UniRule"/>
</dbReference>
<dbReference type="GO" id="GO:0016765">
    <property type="term" value="F:transferase activity, transferring alkyl or aryl (other than methyl) groups"/>
    <property type="evidence" value="ECO:0007669"/>
    <property type="project" value="UniProtKB-UniRule"/>
</dbReference>
<dbReference type="GO" id="GO:0046677">
    <property type="term" value="P:response to antibiotic"/>
    <property type="evidence" value="ECO:0007669"/>
    <property type="project" value="UniProtKB-UniRule"/>
</dbReference>
<dbReference type="Gene3D" id="3.10.180.10">
    <property type="entry name" value="2,3-Dihydroxybiphenyl 1,2-Dioxygenase, domain 1"/>
    <property type="match status" value="1"/>
</dbReference>
<dbReference type="HAMAP" id="MF_01512">
    <property type="entry name" value="FosB"/>
    <property type="match status" value="1"/>
</dbReference>
<dbReference type="InterPro" id="IPR051332">
    <property type="entry name" value="Fosfomycin_Res_Enzymes"/>
</dbReference>
<dbReference type="InterPro" id="IPR029068">
    <property type="entry name" value="Glyas_Bleomycin-R_OHBP_Dase"/>
</dbReference>
<dbReference type="InterPro" id="IPR004360">
    <property type="entry name" value="Glyas_Fos-R_dOase_dom"/>
</dbReference>
<dbReference type="InterPro" id="IPR022858">
    <property type="entry name" value="Metallothiol_Trafse_FosB"/>
</dbReference>
<dbReference type="InterPro" id="IPR037523">
    <property type="entry name" value="VOC"/>
</dbReference>
<dbReference type="NCBIfam" id="NF000493">
    <property type="entry name" value="Fos_BSH"/>
    <property type="match status" value="1"/>
</dbReference>
<dbReference type="NCBIfam" id="NF003152">
    <property type="entry name" value="PRK04101.1"/>
    <property type="match status" value="1"/>
</dbReference>
<dbReference type="PANTHER" id="PTHR36113:SF6">
    <property type="entry name" value="FOSFOMYCIN RESISTANCE PROTEIN FOSX"/>
    <property type="match status" value="1"/>
</dbReference>
<dbReference type="PANTHER" id="PTHR36113">
    <property type="entry name" value="LYASE, PUTATIVE-RELATED-RELATED"/>
    <property type="match status" value="1"/>
</dbReference>
<dbReference type="Pfam" id="PF00903">
    <property type="entry name" value="Glyoxalase"/>
    <property type="match status" value="1"/>
</dbReference>
<dbReference type="SUPFAM" id="SSF54593">
    <property type="entry name" value="Glyoxalase/Bleomycin resistance protein/Dihydroxybiphenyl dioxygenase"/>
    <property type="match status" value="1"/>
</dbReference>
<dbReference type="PROSITE" id="PS51819">
    <property type="entry name" value="VOC"/>
    <property type="match status" value="1"/>
</dbReference>
<comment type="function">
    <text evidence="1">Metallothiol transferase which confers resistance to fosfomycin by catalyzing the addition of a thiol cofactor to fosfomycin. L-cysteine is probably the physiological thiol donor.</text>
</comment>
<comment type="cofactor">
    <cofactor evidence="1">
        <name>Mg(2+)</name>
        <dbReference type="ChEBI" id="CHEBI:18420"/>
    </cofactor>
</comment>
<comment type="subunit">
    <text evidence="1">Homodimer.</text>
</comment>
<comment type="subcellular location">
    <subcellularLocation>
        <location evidence="1">Cytoplasm</location>
    </subcellularLocation>
</comment>
<comment type="similarity">
    <text evidence="1">Belongs to the fosfomycin resistance protein family. FosB subfamily.</text>
</comment>
<protein>
    <recommendedName>
        <fullName evidence="1">Metallothiol transferase FosB</fullName>
        <ecNumber evidence="1">2.5.1.-</ecNumber>
    </recommendedName>
    <alternativeName>
        <fullName evidence="1">Fosfomycin resistance protein</fullName>
    </alternativeName>
</protein>
<name>FOSB_STAAN</name>
<organism>
    <name type="scientific">Staphylococcus aureus (strain N315)</name>
    <dbReference type="NCBI Taxonomy" id="158879"/>
    <lineage>
        <taxon>Bacteria</taxon>
        <taxon>Bacillati</taxon>
        <taxon>Bacillota</taxon>
        <taxon>Bacilli</taxon>
        <taxon>Bacillales</taxon>
        <taxon>Staphylococcaceae</taxon>
        <taxon>Staphylococcus</taxon>
    </lineage>
</organism>
<evidence type="ECO:0000255" key="1">
    <source>
        <dbReference type="HAMAP-Rule" id="MF_01512"/>
    </source>
</evidence>
<evidence type="ECO:0000255" key="2">
    <source>
        <dbReference type="PROSITE-ProRule" id="PRU01163"/>
    </source>
</evidence>
<evidence type="ECO:0007829" key="3">
    <source>
        <dbReference type="PDB" id="4NAZ"/>
    </source>
</evidence>
<evidence type="ECO:0007829" key="4">
    <source>
        <dbReference type="PDB" id="4NB0"/>
    </source>
</evidence>
<accession>P60864</accession>
<accession>Q99RU0</accession>
<sequence length="139" mass="16648">MLKSINHICFSVRNLNDSIHFYRDILLGKLLLTGKKTAYFELAGLWIALNEEKDIPRNEIHFSYTHIAFTIDDSEFKYWHQRLKDNNVNILEGRVRDIRDRQSIYFTDPDGHKLELHTGTLENRLNYYKEAKPHMTFYK</sequence>
<proteinExistence type="evidence at protein level"/>
<feature type="chain" id="PRO_0000164036" description="Metallothiol transferase FosB">
    <location>
        <begin position="1"/>
        <end position="139"/>
    </location>
</feature>
<feature type="domain" description="VOC" evidence="2">
    <location>
        <begin position="4"/>
        <end position="119"/>
    </location>
</feature>
<feature type="active site" description="Proton donor/acceptor" evidence="2">
    <location>
        <position position="115"/>
    </location>
</feature>
<feature type="binding site" evidence="1">
    <location>
        <position position="7"/>
    </location>
    <ligand>
        <name>Mg(2+)</name>
        <dbReference type="ChEBI" id="CHEBI:18420"/>
    </ligand>
</feature>
<feature type="binding site" evidence="1">
    <location>
        <position position="66"/>
    </location>
    <ligand>
        <name>Mg(2+)</name>
        <dbReference type="ChEBI" id="CHEBI:18420"/>
    </ligand>
</feature>
<feature type="binding site" evidence="1">
    <location>
        <position position="115"/>
    </location>
    <ligand>
        <name>Mg(2+)</name>
        <dbReference type="ChEBI" id="CHEBI:18420"/>
    </ligand>
</feature>
<feature type="strand" evidence="3">
    <location>
        <begin position="7"/>
        <end position="13"/>
    </location>
</feature>
<feature type="helix" evidence="3">
    <location>
        <begin position="15"/>
        <end position="23"/>
    </location>
</feature>
<feature type="strand" evidence="3">
    <location>
        <begin position="29"/>
        <end position="34"/>
    </location>
</feature>
<feature type="strand" evidence="3">
    <location>
        <begin position="37"/>
        <end position="42"/>
    </location>
</feature>
<feature type="strand" evidence="3">
    <location>
        <begin position="45"/>
        <end position="51"/>
    </location>
</feature>
<feature type="strand" evidence="3">
    <location>
        <begin position="66"/>
        <end position="70"/>
    </location>
</feature>
<feature type="helix" evidence="3">
    <location>
        <begin position="73"/>
        <end position="75"/>
    </location>
</feature>
<feature type="helix" evidence="3">
    <location>
        <begin position="76"/>
        <end position="85"/>
    </location>
</feature>
<feature type="turn" evidence="4">
    <location>
        <begin position="95"/>
        <end position="101"/>
    </location>
</feature>
<feature type="strand" evidence="3">
    <location>
        <begin position="103"/>
        <end position="107"/>
    </location>
</feature>
<feature type="strand" evidence="3">
    <location>
        <begin position="113"/>
        <end position="117"/>
    </location>
</feature>
<feature type="helix" evidence="3">
    <location>
        <begin position="121"/>
        <end position="131"/>
    </location>
</feature>
<feature type="strand" evidence="4">
    <location>
        <begin position="135"/>
        <end position="137"/>
    </location>
</feature>
<keyword id="KW-0002">3D-structure</keyword>
<keyword id="KW-0046">Antibiotic resistance</keyword>
<keyword id="KW-0963">Cytoplasm</keyword>
<keyword id="KW-0460">Magnesium</keyword>
<keyword id="KW-0479">Metal-binding</keyword>
<keyword id="KW-0808">Transferase</keyword>
<reference key="1">
    <citation type="journal article" date="2001" name="Lancet">
        <title>Whole genome sequencing of meticillin-resistant Staphylococcus aureus.</title>
        <authorList>
            <person name="Kuroda M."/>
            <person name="Ohta T."/>
            <person name="Uchiyama I."/>
            <person name="Baba T."/>
            <person name="Yuzawa H."/>
            <person name="Kobayashi I."/>
            <person name="Cui L."/>
            <person name="Oguchi A."/>
            <person name="Aoki K."/>
            <person name="Nagai Y."/>
            <person name="Lian J.-Q."/>
            <person name="Ito T."/>
            <person name="Kanamori M."/>
            <person name="Matsumaru H."/>
            <person name="Maruyama A."/>
            <person name="Murakami H."/>
            <person name="Hosoyama A."/>
            <person name="Mizutani-Ui Y."/>
            <person name="Takahashi N.K."/>
            <person name="Sawano T."/>
            <person name="Inoue R."/>
            <person name="Kaito C."/>
            <person name="Sekimizu K."/>
            <person name="Hirakawa H."/>
            <person name="Kuhara S."/>
            <person name="Goto S."/>
            <person name="Yabuzaki J."/>
            <person name="Kanehisa M."/>
            <person name="Yamashita A."/>
            <person name="Oshima K."/>
            <person name="Furuya K."/>
            <person name="Yoshino C."/>
            <person name="Shiba T."/>
            <person name="Hattori M."/>
            <person name="Ogasawara N."/>
            <person name="Hayashi H."/>
            <person name="Hiramatsu K."/>
        </authorList>
    </citation>
    <scope>NUCLEOTIDE SEQUENCE [LARGE SCALE GENOMIC DNA]</scope>
    <source>
        <strain>N315</strain>
    </source>
</reference>